<keyword id="KW-0963">Cytoplasm</keyword>
<keyword id="KW-0227">DNA damage</keyword>
<keyword id="KW-0233">DNA recombination</keyword>
<keyword id="KW-0234">DNA repair</keyword>
<keyword id="KW-0238">DNA-binding</keyword>
<dbReference type="EMBL" id="CP000413">
    <property type="protein sequence ID" value="ABJ59819.1"/>
    <property type="molecule type" value="Genomic_DNA"/>
</dbReference>
<dbReference type="RefSeq" id="WP_003647723.1">
    <property type="nucleotide sequence ID" value="NZ_WBMG01000012.1"/>
</dbReference>
<dbReference type="SMR" id="Q045Q3"/>
<dbReference type="GeneID" id="29639230"/>
<dbReference type="KEGG" id="lga:LGAS_0414"/>
<dbReference type="HOGENOM" id="CLU_087936_1_0_9"/>
<dbReference type="BioCyc" id="LGAS324831:G1G6Y-414-MONOMER"/>
<dbReference type="Proteomes" id="UP000000664">
    <property type="component" value="Chromosome"/>
</dbReference>
<dbReference type="GO" id="GO:0005737">
    <property type="term" value="C:cytoplasm"/>
    <property type="evidence" value="ECO:0007669"/>
    <property type="project" value="UniProtKB-SubCell"/>
</dbReference>
<dbReference type="GO" id="GO:0009379">
    <property type="term" value="C:Holliday junction helicase complex"/>
    <property type="evidence" value="ECO:0007669"/>
    <property type="project" value="InterPro"/>
</dbReference>
<dbReference type="GO" id="GO:0048476">
    <property type="term" value="C:Holliday junction resolvase complex"/>
    <property type="evidence" value="ECO:0007669"/>
    <property type="project" value="UniProtKB-UniRule"/>
</dbReference>
<dbReference type="GO" id="GO:0005524">
    <property type="term" value="F:ATP binding"/>
    <property type="evidence" value="ECO:0007669"/>
    <property type="project" value="InterPro"/>
</dbReference>
<dbReference type="GO" id="GO:0000400">
    <property type="term" value="F:four-way junction DNA binding"/>
    <property type="evidence" value="ECO:0007669"/>
    <property type="project" value="UniProtKB-UniRule"/>
</dbReference>
<dbReference type="GO" id="GO:0009378">
    <property type="term" value="F:four-way junction helicase activity"/>
    <property type="evidence" value="ECO:0007669"/>
    <property type="project" value="InterPro"/>
</dbReference>
<dbReference type="GO" id="GO:0006310">
    <property type="term" value="P:DNA recombination"/>
    <property type="evidence" value="ECO:0007669"/>
    <property type="project" value="UniProtKB-UniRule"/>
</dbReference>
<dbReference type="GO" id="GO:0006281">
    <property type="term" value="P:DNA repair"/>
    <property type="evidence" value="ECO:0007669"/>
    <property type="project" value="UniProtKB-UniRule"/>
</dbReference>
<dbReference type="CDD" id="cd14332">
    <property type="entry name" value="UBA_RuvA_C"/>
    <property type="match status" value="1"/>
</dbReference>
<dbReference type="Gene3D" id="1.10.150.20">
    <property type="entry name" value="5' to 3' exonuclease, C-terminal subdomain"/>
    <property type="match status" value="1"/>
</dbReference>
<dbReference type="Gene3D" id="1.10.8.10">
    <property type="entry name" value="DNA helicase RuvA subunit, C-terminal domain"/>
    <property type="match status" value="1"/>
</dbReference>
<dbReference type="Gene3D" id="2.40.50.140">
    <property type="entry name" value="Nucleic acid-binding proteins"/>
    <property type="match status" value="1"/>
</dbReference>
<dbReference type="HAMAP" id="MF_00031">
    <property type="entry name" value="DNA_HJ_migration_RuvA"/>
    <property type="match status" value="1"/>
</dbReference>
<dbReference type="InterPro" id="IPR013849">
    <property type="entry name" value="DNA_helicase_Holl-junc_RuvA_I"/>
</dbReference>
<dbReference type="InterPro" id="IPR003583">
    <property type="entry name" value="Hlx-hairpin-Hlx_DNA-bd_motif"/>
</dbReference>
<dbReference type="InterPro" id="IPR012340">
    <property type="entry name" value="NA-bd_OB-fold"/>
</dbReference>
<dbReference type="InterPro" id="IPR000085">
    <property type="entry name" value="RuvA"/>
</dbReference>
<dbReference type="InterPro" id="IPR010994">
    <property type="entry name" value="RuvA_2-like"/>
</dbReference>
<dbReference type="InterPro" id="IPR011114">
    <property type="entry name" value="RuvA_C"/>
</dbReference>
<dbReference type="InterPro" id="IPR036267">
    <property type="entry name" value="RuvA_C_sf"/>
</dbReference>
<dbReference type="NCBIfam" id="TIGR00084">
    <property type="entry name" value="ruvA"/>
    <property type="match status" value="1"/>
</dbReference>
<dbReference type="Pfam" id="PF14520">
    <property type="entry name" value="HHH_5"/>
    <property type="match status" value="1"/>
</dbReference>
<dbReference type="Pfam" id="PF07499">
    <property type="entry name" value="RuvA_C"/>
    <property type="match status" value="1"/>
</dbReference>
<dbReference type="Pfam" id="PF01330">
    <property type="entry name" value="RuvA_N"/>
    <property type="match status" value="1"/>
</dbReference>
<dbReference type="SMART" id="SM00278">
    <property type="entry name" value="HhH1"/>
    <property type="match status" value="2"/>
</dbReference>
<dbReference type="SUPFAM" id="SSF46929">
    <property type="entry name" value="DNA helicase RuvA subunit, C-terminal domain"/>
    <property type="match status" value="1"/>
</dbReference>
<dbReference type="SUPFAM" id="SSF50249">
    <property type="entry name" value="Nucleic acid-binding proteins"/>
    <property type="match status" value="1"/>
</dbReference>
<dbReference type="SUPFAM" id="SSF47781">
    <property type="entry name" value="RuvA domain 2-like"/>
    <property type="match status" value="1"/>
</dbReference>
<organism>
    <name type="scientific">Lactobacillus gasseri (strain ATCC 33323 / DSM 20243 / BCRC 14619 / CIP 102991 / JCM 1131 / KCTC 3163 / NCIMB 11718 / NCTC 13722 / AM63)</name>
    <dbReference type="NCBI Taxonomy" id="324831"/>
    <lineage>
        <taxon>Bacteria</taxon>
        <taxon>Bacillati</taxon>
        <taxon>Bacillota</taxon>
        <taxon>Bacilli</taxon>
        <taxon>Lactobacillales</taxon>
        <taxon>Lactobacillaceae</taxon>
        <taxon>Lactobacillus</taxon>
    </lineage>
</organism>
<protein>
    <recommendedName>
        <fullName evidence="1">Holliday junction branch migration complex subunit RuvA</fullName>
    </recommendedName>
</protein>
<accession>Q045Q3</accession>
<evidence type="ECO:0000255" key="1">
    <source>
        <dbReference type="HAMAP-Rule" id="MF_00031"/>
    </source>
</evidence>
<comment type="function">
    <text evidence="1">The RuvA-RuvB-RuvC complex processes Holliday junction (HJ) DNA during genetic recombination and DNA repair, while the RuvA-RuvB complex plays an important role in the rescue of blocked DNA replication forks via replication fork reversal (RFR). RuvA specifically binds to HJ cruciform DNA, conferring on it an open structure. The RuvB hexamer acts as an ATP-dependent pump, pulling dsDNA into and through the RuvAB complex. HJ branch migration allows RuvC to scan DNA until it finds its consensus sequence, where it cleaves and resolves the cruciform DNA.</text>
</comment>
<comment type="subunit">
    <text evidence="1">Homotetramer. Forms an RuvA(8)-RuvB(12)-Holliday junction (HJ) complex. HJ DNA is sandwiched between 2 RuvA tetramers; dsDNA enters through RuvA and exits via RuvB. An RuvB hexamer assembles on each DNA strand where it exits the tetramer. Each RuvB hexamer is contacted by two RuvA subunits (via domain III) on 2 adjacent RuvB subunits; this complex drives branch migration. In the full resolvosome a probable DNA-RuvA(4)-RuvB(12)-RuvC(2) complex forms which resolves the HJ.</text>
</comment>
<comment type="subcellular location">
    <subcellularLocation>
        <location evidence="1">Cytoplasm</location>
    </subcellularLocation>
</comment>
<comment type="domain">
    <text evidence="1">Has three domains with a flexible linker between the domains II and III and assumes an 'L' shape. Domain III is highly mobile and contacts RuvB.</text>
</comment>
<comment type="similarity">
    <text evidence="1">Belongs to the RuvA family.</text>
</comment>
<name>RUVA_LACGA</name>
<sequence>MFEYLKGIVAKIDPAYVVLDVNGIGYKILCPTPYSYQENQPATIYVEQVVRDTGITLYGFLSLEDKELFLKLLSVSGIGPKSAVAIMAAEDTDSLASAIQNGEVKYLTRFPGVGKKTASQIVLDLKGKLGDYVKKSAVATDLTPSLQDALLALVALGYTQKEVDRITPKLAKLPENTADGYIKEALALLLKK</sequence>
<proteinExistence type="inferred from homology"/>
<reference key="1">
    <citation type="journal article" date="2006" name="Proc. Natl. Acad. Sci. U.S.A.">
        <title>Comparative genomics of the lactic acid bacteria.</title>
        <authorList>
            <person name="Makarova K.S."/>
            <person name="Slesarev A."/>
            <person name="Wolf Y.I."/>
            <person name="Sorokin A."/>
            <person name="Mirkin B."/>
            <person name="Koonin E.V."/>
            <person name="Pavlov A."/>
            <person name="Pavlova N."/>
            <person name="Karamychev V."/>
            <person name="Polouchine N."/>
            <person name="Shakhova V."/>
            <person name="Grigoriev I."/>
            <person name="Lou Y."/>
            <person name="Rohksar D."/>
            <person name="Lucas S."/>
            <person name="Huang K."/>
            <person name="Goodstein D.M."/>
            <person name="Hawkins T."/>
            <person name="Plengvidhya V."/>
            <person name="Welker D."/>
            <person name="Hughes J."/>
            <person name="Goh Y."/>
            <person name="Benson A."/>
            <person name="Baldwin K."/>
            <person name="Lee J.-H."/>
            <person name="Diaz-Muniz I."/>
            <person name="Dosti B."/>
            <person name="Smeianov V."/>
            <person name="Wechter W."/>
            <person name="Barabote R."/>
            <person name="Lorca G."/>
            <person name="Altermann E."/>
            <person name="Barrangou R."/>
            <person name="Ganesan B."/>
            <person name="Xie Y."/>
            <person name="Rawsthorne H."/>
            <person name="Tamir D."/>
            <person name="Parker C."/>
            <person name="Breidt F."/>
            <person name="Broadbent J.R."/>
            <person name="Hutkins R."/>
            <person name="O'Sullivan D."/>
            <person name="Steele J."/>
            <person name="Unlu G."/>
            <person name="Saier M.H. Jr."/>
            <person name="Klaenhammer T."/>
            <person name="Richardson P."/>
            <person name="Kozyavkin S."/>
            <person name="Weimer B.C."/>
            <person name="Mills D.A."/>
        </authorList>
    </citation>
    <scope>NUCLEOTIDE SEQUENCE [LARGE SCALE GENOMIC DNA]</scope>
    <source>
        <strain>ATCC 33323 / DSM 20243 / BCRC 14619 / CIP 102991 / JCM 1131 / KCTC 3163 / NCIMB 11718 / NCTC 13722 / AM63</strain>
    </source>
</reference>
<feature type="chain" id="PRO_1000002471" description="Holliday junction branch migration complex subunit RuvA">
    <location>
        <begin position="1"/>
        <end position="192"/>
    </location>
</feature>
<feature type="region of interest" description="Domain I" evidence="1">
    <location>
        <begin position="1"/>
        <end position="61"/>
    </location>
</feature>
<feature type="region of interest" description="Domain II" evidence="1">
    <location>
        <begin position="62"/>
        <end position="137"/>
    </location>
</feature>
<feature type="region of interest" description="Flexible linker" evidence="1">
    <location>
        <begin position="137"/>
        <end position="140"/>
    </location>
</feature>
<feature type="region of interest" description="Domain III" evidence="1">
    <location>
        <begin position="141"/>
        <end position="192"/>
    </location>
</feature>
<gene>
    <name evidence="1" type="primary">ruvA</name>
    <name type="ordered locus">LGAS_0414</name>
</gene>